<evidence type="ECO:0000250" key="1">
    <source>
        <dbReference type="UniProtKB" id="P68871"/>
    </source>
</evidence>
<evidence type="ECO:0000255" key="2">
    <source>
        <dbReference type="PROSITE-ProRule" id="PRU00238"/>
    </source>
</evidence>
<organism>
    <name type="scientific">Bos gaurus frontalis</name>
    <name type="common">Domestic gayal</name>
    <name type="synonym">Bos frontalis</name>
    <dbReference type="NCBI Taxonomy" id="30520"/>
    <lineage>
        <taxon>Eukaryota</taxon>
        <taxon>Metazoa</taxon>
        <taxon>Chordata</taxon>
        <taxon>Craniata</taxon>
        <taxon>Vertebrata</taxon>
        <taxon>Euteleostomi</taxon>
        <taxon>Mammalia</taxon>
        <taxon>Eutheria</taxon>
        <taxon>Laurasiatheria</taxon>
        <taxon>Artiodactyla</taxon>
        <taxon>Ruminantia</taxon>
        <taxon>Pecora</taxon>
        <taxon>Bovidae</taxon>
        <taxon>Bovinae</taxon>
        <taxon>Bos</taxon>
    </lineage>
</organism>
<gene>
    <name type="primary">HBB</name>
</gene>
<accession>P67819</accession>
<accession>P02071</accession>
<dbReference type="PIR" id="A02389">
    <property type="entry name" value="HBBOG"/>
</dbReference>
<dbReference type="SMR" id="P67819"/>
<dbReference type="GO" id="GO:0072562">
    <property type="term" value="C:blood microparticle"/>
    <property type="evidence" value="ECO:0007669"/>
    <property type="project" value="TreeGrafter"/>
</dbReference>
<dbReference type="GO" id="GO:0031838">
    <property type="term" value="C:haptoglobin-hemoglobin complex"/>
    <property type="evidence" value="ECO:0007669"/>
    <property type="project" value="TreeGrafter"/>
</dbReference>
<dbReference type="GO" id="GO:0005833">
    <property type="term" value="C:hemoglobin complex"/>
    <property type="evidence" value="ECO:0007669"/>
    <property type="project" value="InterPro"/>
</dbReference>
<dbReference type="GO" id="GO:0031720">
    <property type="term" value="F:haptoglobin binding"/>
    <property type="evidence" value="ECO:0007669"/>
    <property type="project" value="TreeGrafter"/>
</dbReference>
<dbReference type="GO" id="GO:0020037">
    <property type="term" value="F:heme binding"/>
    <property type="evidence" value="ECO:0007669"/>
    <property type="project" value="InterPro"/>
</dbReference>
<dbReference type="GO" id="GO:0031721">
    <property type="term" value="F:hemoglobin alpha binding"/>
    <property type="evidence" value="ECO:0007669"/>
    <property type="project" value="TreeGrafter"/>
</dbReference>
<dbReference type="GO" id="GO:0046872">
    <property type="term" value="F:metal ion binding"/>
    <property type="evidence" value="ECO:0007669"/>
    <property type="project" value="UniProtKB-KW"/>
</dbReference>
<dbReference type="GO" id="GO:0043177">
    <property type="term" value="F:organic acid binding"/>
    <property type="evidence" value="ECO:0007669"/>
    <property type="project" value="TreeGrafter"/>
</dbReference>
<dbReference type="GO" id="GO:0019825">
    <property type="term" value="F:oxygen binding"/>
    <property type="evidence" value="ECO:0007669"/>
    <property type="project" value="InterPro"/>
</dbReference>
<dbReference type="GO" id="GO:0005344">
    <property type="term" value="F:oxygen carrier activity"/>
    <property type="evidence" value="ECO:0007669"/>
    <property type="project" value="UniProtKB-KW"/>
</dbReference>
<dbReference type="GO" id="GO:0004601">
    <property type="term" value="F:peroxidase activity"/>
    <property type="evidence" value="ECO:0007669"/>
    <property type="project" value="TreeGrafter"/>
</dbReference>
<dbReference type="GO" id="GO:0042744">
    <property type="term" value="P:hydrogen peroxide catabolic process"/>
    <property type="evidence" value="ECO:0007669"/>
    <property type="project" value="TreeGrafter"/>
</dbReference>
<dbReference type="CDD" id="cd08925">
    <property type="entry name" value="Hb-beta-like"/>
    <property type="match status" value="1"/>
</dbReference>
<dbReference type="FunFam" id="1.10.490.10:FF:000001">
    <property type="entry name" value="Hemoglobin subunit beta"/>
    <property type="match status" value="1"/>
</dbReference>
<dbReference type="Gene3D" id="1.10.490.10">
    <property type="entry name" value="Globins"/>
    <property type="match status" value="1"/>
</dbReference>
<dbReference type="InterPro" id="IPR000971">
    <property type="entry name" value="Globin"/>
</dbReference>
<dbReference type="InterPro" id="IPR009050">
    <property type="entry name" value="Globin-like_sf"/>
</dbReference>
<dbReference type="InterPro" id="IPR012292">
    <property type="entry name" value="Globin/Proto"/>
</dbReference>
<dbReference type="InterPro" id="IPR002337">
    <property type="entry name" value="Hemoglobin_b"/>
</dbReference>
<dbReference type="InterPro" id="IPR050056">
    <property type="entry name" value="Hemoglobin_oxygen_transport"/>
</dbReference>
<dbReference type="PANTHER" id="PTHR11442">
    <property type="entry name" value="HEMOGLOBIN FAMILY MEMBER"/>
    <property type="match status" value="1"/>
</dbReference>
<dbReference type="PANTHER" id="PTHR11442:SF42">
    <property type="entry name" value="HEMOGLOBIN SUBUNIT BETA"/>
    <property type="match status" value="1"/>
</dbReference>
<dbReference type="Pfam" id="PF00042">
    <property type="entry name" value="Globin"/>
    <property type="match status" value="1"/>
</dbReference>
<dbReference type="PRINTS" id="PR00814">
    <property type="entry name" value="BETAHAEM"/>
</dbReference>
<dbReference type="SUPFAM" id="SSF46458">
    <property type="entry name" value="Globin-like"/>
    <property type="match status" value="1"/>
</dbReference>
<dbReference type="PROSITE" id="PS01033">
    <property type="entry name" value="GLOBIN"/>
    <property type="match status" value="1"/>
</dbReference>
<name>HBB_BOSGF</name>
<protein>
    <recommendedName>
        <fullName>Hemoglobin subunit beta</fullName>
    </recommendedName>
    <alternativeName>
        <fullName>Beta-globin</fullName>
    </alternativeName>
    <alternativeName>
        <fullName>Hemoglobin beta chain</fullName>
    </alternativeName>
</protein>
<reference key="1">
    <citation type="journal article" date="1984" name="Hoppe-Seyler's Z. Physiol. Chem.">
        <title>Amino-acid sequence of gayal hemoglobin (Bos gaurus frontalis, Bovidae).</title>
        <authorList>
            <person name="Lalthantluanga R."/>
            <person name="Braunitzer G."/>
        </authorList>
    </citation>
    <scope>PROTEIN SEQUENCE</scope>
</reference>
<sequence length="145" mass="15986">MLTAEEKAAVTAFWGKVHVDEVGGEALGRLLVVYPWTQRFFESFGDLSTADAVMNNPKVKAHGKKVLDSFSNGMKHLDDLKGTFAALSELHCDKLHVDPENFKLLGNVLVVVLARHFGKEFTPVLQADFQKVVAGVANALAHRYH</sequence>
<keyword id="KW-0007">Acetylation</keyword>
<keyword id="KW-0903">Direct protein sequencing</keyword>
<keyword id="KW-0349">Heme</keyword>
<keyword id="KW-0408">Iron</keyword>
<keyword id="KW-0479">Metal-binding</keyword>
<keyword id="KW-0561">Oxygen transport</keyword>
<keyword id="KW-0597">Phosphoprotein</keyword>
<keyword id="KW-0702">S-nitrosylation</keyword>
<keyword id="KW-0813">Transport</keyword>
<feature type="chain" id="PRO_0000052889" description="Hemoglobin subunit beta">
    <location>
        <begin position="1"/>
        <end position="145"/>
    </location>
</feature>
<feature type="domain" description="Globin" evidence="2">
    <location>
        <begin position="1"/>
        <end position="145"/>
    </location>
</feature>
<feature type="binding site" description="distal binding residue">
    <location>
        <position position="62"/>
    </location>
    <ligand>
        <name>heme b</name>
        <dbReference type="ChEBI" id="CHEBI:60344"/>
    </ligand>
    <ligandPart>
        <name>Fe</name>
        <dbReference type="ChEBI" id="CHEBI:18248"/>
    </ligandPart>
</feature>
<feature type="binding site" description="proximal binding residue">
    <location>
        <position position="91"/>
    </location>
    <ligand>
        <name>heme b</name>
        <dbReference type="ChEBI" id="CHEBI:60344"/>
    </ligand>
    <ligandPart>
        <name>Fe</name>
        <dbReference type="ChEBI" id="CHEBI:18248"/>
    </ligandPart>
</feature>
<feature type="modified residue" description="Phosphothreonine" evidence="1">
    <location>
        <position position="11"/>
    </location>
</feature>
<feature type="modified residue" description="Phosphoserine" evidence="1">
    <location>
        <position position="43"/>
    </location>
</feature>
<feature type="modified residue" description="N6-acetyllysine" evidence="1">
    <location>
        <position position="58"/>
    </location>
</feature>
<feature type="modified residue" description="N6-acetyllysine" evidence="1">
    <location>
        <position position="81"/>
    </location>
</feature>
<feature type="modified residue" description="S-nitrosocysteine" evidence="1">
    <location>
        <position position="92"/>
    </location>
</feature>
<comment type="function">
    <text>Involved in oxygen transport from the lung to the various peripheral tissues.</text>
</comment>
<comment type="subunit">
    <text>Heterotetramer of two alpha chains and two beta chains.</text>
</comment>
<comment type="tissue specificity">
    <text>Red blood cells.</text>
</comment>
<comment type="similarity">
    <text evidence="2">Belongs to the globin family.</text>
</comment>
<proteinExistence type="evidence at protein level"/>